<evidence type="ECO:0000255" key="1">
    <source>
        <dbReference type="HAMAP-Rule" id="MF_03011"/>
    </source>
</evidence>
<evidence type="ECO:0000255" key="2">
    <source>
        <dbReference type="PROSITE-ProRule" id="PRU01185"/>
    </source>
</evidence>
<evidence type="ECO:0000256" key="3">
    <source>
        <dbReference type="SAM" id="MobiDB-lite"/>
    </source>
</evidence>
<organism>
    <name type="scientific">Mycosarcoma maydis</name>
    <name type="common">Corn smut fungus</name>
    <name type="synonym">Ustilago maydis</name>
    <dbReference type="NCBI Taxonomy" id="5270"/>
    <lineage>
        <taxon>Eukaryota</taxon>
        <taxon>Fungi</taxon>
        <taxon>Dikarya</taxon>
        <taxon>Basidiomycota</taxon>
        <taxon>Ustilaginomycotina</taxon>
        <taxon>Ustilaginomycetes</taxon>
        <taxon>Ustilaginales</taxon>
        <taxon>Ustilaginaceae</taxon>
        <taxon>Mycosarcoma</taxon>
    </lineage>
</organism>
<name>EIF3L_MYCMD</name>
<dbReference type="EMBL" id="CM003141">
    <property type="protein sequence ID" value="KIS71328.1"/>
    <property type="molecule type" value="Genomic_DNA"/>
</dbReference>
<dbReference type="RefSeq" id="XP_011387162.1">
    <property type="nucleotide sequence ID" value="XM_011388860.1"/>
</dbReference>
<dbReference type="SMR" id="Q4PF85"/>
<dbReference type="STRING" id="237631.Q4PF85"/>
<dbReference type="EnsemblFungi" id="KIS71328">
    <property type="protein sequence ID" value="KIS71328"/>
    <property type="gene ID" value="UMAG_01228"/>
</dbReference>
<dbReference type="GeneID" id="23562318"/>
<dbReference type="KEGG" id="uma:UMAG_01228"/>
<dbReference type="VEuPathDB" id="FungiDB:UMAG_01228"/>
<dbReference type="eggNOG" id="KOG3677">
    <property type="taxonomic scope" value="Eukaryota"/>
</dbReference>
<dbReference type="HOGENOM" id="CLU_029210_0_1_1"/>
<dbReference type="InParanoid" id="Q4PF85"/>
<dbReference type="OMA" id="INRVTAC"/>
<dbReference type="OrthoDB" id="15082at2759"/>
<dbReference type="Proteomes" id="UP000000561">
    <property type="component" value="Chromosome 2"/>
</dbReference>
<dbReference type="GO" id="GO:0016282">
    <property type="term" value="C:eukaryotic 43S preinitiation complex"/>
    <property type="evidence" value="ECO:0007669"/>
    <property type="project" value="UniProtKB-UniRule"/>
</dbReference>
<dbReference type="GO" id="GO:0033290">
    <property type="term" value="C:eukaryotic 48S preinitiation complex"/>
    <property type="evidence" value="ECO:0007669"/>
    <property type="project" value="UniProtKB-UniRule"/>
</dbReference>
<dbReference type="GO" id="GO:0005852">
    <property type="term" value="C:eukaryotic translation initiation factor 3 complex"/>
    <property type="evidence" value="ECO:0000318"/>
    <property type="project" value="GO_Central"/>
</dbReference>
<dbReference type="GO" id="GO:0003743">
    <property type="term" value="F:translation initiation factor activity"/>
    <property type="evidence" value="ECO:0007669"/>
    <property type="project" value="UniProtKB-UniRule"/>
</dbReference>
<dbReference type="GO" id="GO:0001732">
    <property type="term" value="P:formation of cytoplasmic translation initiation complex"/>
    <property type="evidence" value="ECO:0007669"/>
    <property type="project" value="UniProtKB-UniRule"/>
</dbReference>
<dbReference type="GO" id="GO:0006413">
    <property type="term" value="P:translational initiation"/>
    <property type="evidence" value="ECO:0000318"/>
    <property type="project" value="GO_Central"/>
</dbReference>
<dbReference type="HAMAP" id="MF_03011">
    <property type="entry name" value="eIF3l"/>
    <property type="match status" value="1"/>
</dbReference>
<dbReference type="InterPro" id="IPR019382">
    <property type="entry name" value="eIF3l"/>
</dbReference>
<dbReference type="InterPro" id="IPR000717">
    <property type="entry name" value="PCI_dom"/>
</dbReference>
<dbReference type="PANTHER" id="PTHR13242">
    <property type="entry name" value="EUKARYOTIC TRANSLATION INITIATION FACTOR 3"/>
    <property type="match status" value="1"/>
</dbReference>
<dbReference type="PANTHER" id="PTHR13242:SF0">
    <property type="entry name" value="EUKARYOTIC TRANSLATION INITIATION FACTOR 3 SUBUNIT L"/>
    <property type="match status" value="1"/>
</dbReference>
<dbReference type="Pfam" id="PF10255">
    <property type="entry name" value="Paf67"/>
    <property type="match status" value="1"/>
</dbReference>
<dbReference type="PROSITE" id="PS50250">
    <property type="entry name" value="PCI"/>
    <property type="match status" value="1"/>
</dbReference>
<reference key="1">
    <citation type="journal article" date="2006" name="Nature">
        <title>Insights from the genome of the biotrophic fungal plant pathogen Ustilago maydis.</title>
        <authorList>
            <person name="Kaemper J."/>
            <person name="Kahmann R."/>
            <person name="Boelker M."/>
            <person name="Ma L.-J."/>
            <person name="Brefort T."/>
            <person name="Saville B.J."/>
            <person name="Banuett F."/>
            <person name="Kronstad J.W."/>
            <person name="Gold S.E."/>
            <person name="Mueller O."/>
            <person name="Perlin M.H."/>
            <person name="Woesten H.A.B."/>
            <person name="de Vries R."/>
            <person name="Ruiz-Herrera J."/>
            <person name="Reynaga-Pena C.G."/>
            <person name="Snetselaar K."/>
            <person name="McCann M."/>
            <person name="Perez-Martin J."/>
            <person name="Feldbruegge M."/>
            <person name="Basse C.W."/>
            <person name="Steinberg G."/>
            <person name="Ibeas J.I."/>
            <person name="Holloman W."/>
            <person name="Guzman P."/>
            <person name="Farman M.L."/>
            <person name="Stajich J.E."/>
            <person name="Sentandreu R."/>
            <person name="Gonzalez-Prieto J.M."/>
            <person name="Kennell J.C."/>
            <person name="Molina L."/>
            <person name="Schirawski J."/>
            <person name="Mendoza-Mendoza A."/>
            <person name="Greilinger D."/>
            <person name="Muench K."/>
            <person name="Roessel N."/>
            <person name="Scherer M."/>
            <person name="Vranes M."/>
            <person name="Ladendorf O."/>
            <person name="Vincon V."/>
            <person name="Fuchs U."/>
            <person name="Sandrock B."/>
            <person name="Meng S."/>
            <person name="Ho E.C.H."/>
            <person name="Cahill M.J."/>
            <person name="Boyce K.J."/>
            <person name="Klose J."/>
            <person name="Klosterman S.J."/>
            <person name="Deelstra H.J."/>
            <person name="Ortiz-Castellanos L."/>
            <person name="Li W."/>
            <person name="Sanchez-Alonso P."/>
            <person name="Schreier P.H."/>
            <person name="Haeuser-Hahn I."/>
            <person name="Vaupel M."/>
            <person name="Koopmann E."/>
            <person name="Friedrich G."/>
            <person name="Voss H."/>
            <person name="Schlueter T."/>
            <person name="Margolis J."/>
            <person name="Platt D."/>
            <person name="Swimmer C."/>
            <person name="Gnirke A."/>
            <person name="Chen F."/>
            <person name="Vysotskaia V."/>
            <person name="Mannhaupt G."/>
            <person name="Gueldener U."/>
            <person name="Muensterkoetter M."/>
            <person name="Haase D."/>
            <person name="Oesterheld M."/>
            <person name="Mewes H.-W."/>
            <person name="Mauceli E.W."/>
            <person name="DeCaprio D."/>
            <person name="Wade C.M."/>
            <person name="Butler J."/>
            <person name="Young S.K."/>
            <person name="Jaffe D.B."/>
            <person name="Calvo S.E."/>
            <person name="Nusbaum C."/>
            <person name="Galagan J.E."/>
            <person name="Birren B.W."/>
        </authorList>
    </citation>
    <scope>NUCLEOTIDE SEQUENCE [LARGE SCALE GENOMIC DNA]</scope>
    <source>
        <strain>DSM 14603 / FGSC 9021 / UM521</strain>
    </source>
</reference>
<reference key="2">
    <citation type="submission" date="2014-09" db="EMBL/GenBank/DDBJ databases">
        <authorList>
            <person name="Gueldener U."/>
            <person name="Muensterkoetter M."/>
            <person name="Walter M.C."/>
            <person name="Mannhaupt G."/>
            <person name="Kahmann R."/>
        </authorList>
    </citation>
    <scope>GENOME REANNOTATION</scope>
    <source>
        <strain>DSM 14603 / FGSC 9021 / UM521</strain>
    </source>
</reference>
<feature type="chain" id="PRO_0000364270" description="Eukaryotic translation initiation factor 3 subunit L">
    <location>
        <begin position="1"/>
        <end position="668"/>
    </location>
</feature>
<feature type="domain" description="PCI" evidence="2">
    <location>
        <begin position="358"/>
        <end position="552"/>
    </location>
</feature>
<feature type="region of interest" description="Disordered" evidence="3">
    <location>
        <begin position="1"/>
        <end position="42"/>
    </location>
</feature>
<feature type="region of interest" description="Disordered" evidence="3">
    <location>
        <begin position="625"/>
        <end position="668"/>
    </location>
</feature>
<feature type="compositionally biased region" description="Polar residues" evidence="3">
    <location>
        <begin position="1"/>
        <end position="17"/>
    </location>
</feature>
<feature type="compositionally biased region" description="Low complexity" evidence="3">
    <location>
        <begin position="18"/>
        <end position="32"/>
    </location>
</feature>
<feature type="compositionally biased region" description="Acidic residues" evidence="3">
    <location>
        <begin position="33"/>
        <end position="42"/>
    </location>
</feature>
<feature type="compositionally biased region" description="Low complexity" evidence="3">
    <location>
        <begin position="648"/>
        <end position="662"/>
    </location>
</feature>
<protein>
    <recommendedName>
        <fullName evidence="1">Eukaryotic translation initiation factor 3 subunit L</fullName>
        <shortName evidence="1">eIF3l</shortName>
    </recommendedName>
</protein>
<accession>Q4PF85</accession>
<accession>A0A0D1CYA5</accession>
<sequence>MVADASQQGQSNGAAFNQQQQYQQQQQRQLFGGEEEFGDEEELGDDVDLVVGDYSAAFAGEAGAEVDEAQAAALAAAHAQAQQQAQAAALAAVPDQIRKYVVLFNQAVQINNVQDISNAYEGTWNRLTDKFYARSEWPEAETIAPLVNDDQKFLTLYRELWYRHVYSRLSPDGEDRFHSYDNYCDFFNFVLNSDGPVQLELPAQWLWDIIDEFIYQFQSFSQWRNKVSNKSEDEIALLQDGGVWSSYSVLNVLYSLIQKSRITEQLVAASKGEDPDEVAGEFGSKPLYRMLGYFSIIGLLRVHVLLGDYTLALKMLDHIELNKKSGLINRVTACHVTAYYYVGFAYLMLRRYPDCIKSFTHILVFIMRLRQYHTRSYQYDQINKTADRMYALLSMACALCPTRLDENIQTQMRDKYGDQFSKMTRPGAEGLAAFEELFIYACPKFITANSPAYHDEEALVEYKQKAVFPDPTQHQLRVFLSDVKTQLSNANVRSFLRLYTTLGTDKLASFLEIDEEELVEMMMVMKNSTRSLKWSSGSLLHGQVVNTSDLDFVIDTDMVHIAESRVGRRYGDWFLRNGTRMHDVLNNIQAKPLPIVSKQVQDEAAAAAAEAKDAKDKKVKNAWAAGVKAGPPAFSQRSGGAGRSSVNKSAPAPAGAWGSSKPQPSVTA</sequence>
<keyword id="KW-0963">Cytoplasm</keyword>
<keyword id="KW-0396">Initiation factor</keyword>
<keyword id="KW-0648">Protein biosynthesis</keyword>
<keyword id="KW-1185">Reference proteome</keyword>
<proteinExistence type="inferred from homology"/>
<gene>
    <name type="ORF">UMAG_01228</name>
</gene>
<comment type="function">
    <text evidence="1">Component of the eukaryotic translation initiation factor 3 (eIF-3) complex, which is involved in protein synthesis of a specialized repertoire of mRNAs and, together with other initiation factors, stimulates binding of mRNA and methionyl-tRNAi to the 40S ribosome. The eIF-3 complex specifically targets and initiates translation of a subset of mRNAs involved in cell proliferation.</text>
</comment>
<comment type="subunit">
    <text evidence="1">Component of the eukaryotic translation initiation factor 3 (eIF-3) complex.</text>
</comment>
<comment type="subcellular location">
    <subcellularLocation>
        <location evidence="1">Cytoplasm</location>
    </subcellularLocation>
</comment>
<comment type="similarity">
    <text evidence="1">Belongs to the eIF-3 subunit L family.</text>
</comment>